<accession>P03526</accession>
<accession>A4ZY28</accession>
<accession>Q9ENN1</accession>
<dbReference type="EMBL" id="X01627">
    <property type="protein sequence ID" value="CAA25768.1"/>
    <property type="molecule type" value="Genomic_RNA"/>
</dbReference>
<dbReference type="EMBL" id="AF076293">
    <property type="protein sequence ID" value="AAG02124.1"/>
    <property type="molecule type" value="mRNA"/>
</dbReference>
<dbReference type="EMBL" id="EF494443">
    <property type="protein sequence ID" value="ABP48921.1"/>
    <property type="molecule type" value="Genomic_RNA"/>
</dbReference>
<dbReference type="EMBL" id="J02330">
    <property type="protein sequence ID" value="AAA47280.1"/>
    <property type="molecule type" value="Genomic_RNA"/>
</dbReference>
<dbReference type="PIR" id="A04126">
    <property type="entry name" value="MNXRSD"/>
</dbReference>
<dbReference type="PIR" id="C27401">
    <property type="entry name" value="C27401"/>
</dbReference>
<dbReference type="RefSeq" id="YP_010839449.1">
    <property type="nucleotide sequence ID" value="NC_077837.1"/>
</dbReference>
<dbReference type="PDB" id="8TKA">
    <property type="method" value="X-ray"/>
    <property type="resolution" value="3.00 A"/>
    <property type="chains" value="A/B=1-366"/>
</dbReference>
<dbReference type="PDB" id="8TL1">
    <property type="method" value="X-ray"/>
    <property type="resolution" value="3.16 A"/>
    <property type="chains" value="A=18-366"/>
</dbReference>
<dbReference type="PDB" id="8TL8">
    <property type="method" value="X-ray"/>
    <property type="resolution" value="3.20 A"/>
    <property type="chains" value="A/B=1-366"/>
</dbReference>
<dbReference type="PDBsum" id="8TKA"/>
<dbReference type="PDBsum" id="8TL1"/>
<dbReference type="PDBsum" id="8TL8"/>
<dbReference type="SMR" id="P03526"/>
<dbReference type="GeneID" id="80549138"/>
<dbReference type="Proteomes" id="UP000006373">
    <property type="component" value="Genome"/>
</dbReference>
<dbReference type="GO" id="GO:0030430">
    <property type="term" value="C:host cell cytoplasm"/>
    <property type="evidence" value="ECO:0007669"/>
    <property type="project" value="UniProtKB-SubCell"/>
</dbReference>
<dbReference type="GO" id="GO:0003968">
    <property type="term" value="F:RNA-directed RNA polymerase activity"/>
    <property type="evidence" value="ECO:0007669"/>
    <property type="project" value="InterPro"/>
</dbReference>
<dbReference type="GO" id="GO:0003727">
    <property type="term" value="F:single-stranded RNA binding"/>
    <property type="evidence" value="ECO:0007669"/>
    <property type="project" value="InterPro"/>
</dbReference>
<dbReference type="InterPro" id="IPR002507">
    <property type="entry name" value="Reovirus_polyG_pol"/>
</dbReference>
<dbReference type="Pfam" id="PF01518">
    <property type="entry name" value="PolyG_pol"/>
    <property type="match status" value="1"/>
</dbReference>
<gene>
    <name type="primary">S3</name>
</gene>
<comment type="function">
    <text evidence="3 5">Protein that binds to ssRNA and participates with protein mu-NS in forming the matrix of viral factories, which are large inclusions in the host cytoplasm where replication intermediates are assembled and viral RNA replication takes place (PubMed:11152519). Plays a role in the inhibition of the integrated stress response (ISR) to escape from host cell translational shutoff (PubMed:28794026). Participates in the disruption of stress granules (SG) through its association with host G3BP1 and mu-NS (PubMed:28794026).</text>
</comment>
<comment type="subunit">
    <text evidence="4 5">Homooligomer; in presence of RNA (PubMed:12719587). Interacts with protein mu-NS; this interaction allows the localization of sigma-NS to the viral factories (PubMed:12719587, PubMed:28794026). Interacts with host G3BP1 (via C-terminus); this interaction induces the relocalization of G3BP1 and other SG proteins to the viral factories periphery (PubMed:28794026).</text>
</comment>
<comment type="subcellular location">
    <subcellularLocation>
        <location evidence="2">Host cytoplasm</location>
    </subcellularLocation>
    <text evidence="2">Localizes to the viral factories formed by mu-NS.</text>
</comment>
<comment type="miscellaneous">
    <text evidence="5">There is a strain variablity in the inhibition of the host integrated stress response (ISR). There is a correlation with the abilities of the strains to prevent upstream PKR activation and EIF2S1/eIF2-alpha phosphorylation.</text>
</comment>
<comment type="similarity">
    <text evidence="6">Belongs to the orthoreovirus sigma-NS protein family.</text>
</comment>
<organismHost>
    <name type="scientific">Mammalia</name>
    <dbReference type="NCBI Taxonomy" id="40674"/>
</organismHost>
<evidence type="ECO:0000250" key="1">
    <source>
        <dbReference type="UniProtKB" id="P07940"/>
    </source>
</evidence>
<evidence type="ECO:0000250" key="2">
    <source>
        <dbReference type="UniProtKB" id="P12002"/>
    </source>
</evidence>
<evidence type="ECO:0000269" key="3">
    <source>
    </source>
</evidence>
<evidence type="ECO:0000269" key="4">
    <source>
    </source>
</evidence>
<evidence type="ECO:0000269" key="5">
    <source>
    </source>
</evidence>
<evidence type="ECO:0000305" key="6"/>
<evidence type="ECO:0007829" key="7">
    <source>
        <dbReference type="PDB" id="8TKA"/>
    </source>
</evidence>
<evidence type="ECO:0007829" key="8">
    <source>
        <dbReference type="PDB" id="8TL1"/>
    </source>
</evidence>
<protein>
    <recommendedName>
        <fullName>Protein sigma-NS</fullName>
        <shortName>SigmaNS</shortName>
    </recommendedName>
</protein>
<keyword id="KW-0002">3D-structure</keyword>
<keyword id="KW-1035">Host cytoplasm</keyword>
<keyword id="KW-0694">RNA-binding</keyword>
<organism>
    <name type="scientific">Reovirus type 3 (strain Dearing)</name>
    <name type="common">T3D</name>
    <name type="synonym">Mammalian orthoreovirus 3</name>
    <dbReference type="NCBI Taxonomy" id="10886"/>
    <lineage>
        <taxon>Viruses</taxon>
        <taxon>Riboviria</taxon>
        <taxon>Orthornavirae</taxon>
        <taxon>Duplornaviricota</taxon>
        <taxon>Resentoviricetes</taxon>
        <taxon>Reovirales</taxon>
        <taxon>Spinareoviridae</taxon>
        <taxon>Orthoreovirus</taxon>
        <taxon>Mammalian orthoreovirus</taxon>
    </lineage>
</organism>
<name>SIGNS_REOVD</name>
<proteinExistence type="evidence at protein level"/>
<reference key="1">
    <citation type="journal article" date="1983" name="Nucleic Acids Res.">
        <title>Nucleotide sequence of reovirus genome segment S3, encoding non-structural protein sigma NS.</title>
        <authorList>
            <person name="Richardson M.A."/>
            <person name="Furuichi Y."/>
        </authorList>
    </citation>
    <scope>NUCLEOTIDE SEQUENCE [GENOMIC RNA]</scope>
</reference>
<reference key="2">
    <citation type="journal article" date="2001" name="J. Virol.">
        <title>Reovirus sigmaNS protein is required for nucleation of viral assembly complexes and formation of viral inclusions.</title>
        <authorList>
            <person name="Becker M.M."/>
            <person name="Goral M.I."/>
            <person name="Hazelton P.R."/>
            <person name="Baer G.S."/>
            <person name="Rodgers S.E."/>
            <person name="Brown E.G."/>
            <person name="Coombs K.M."/>
            <person name="Dermody T.S."/>
        </authorList>
    </citation>
    <scope>NUCLEOTIDE SEQUENCE [MRNA]</scope>
    <scope>FUNCTION</scope>
    <source>
        <strain>Mutant tsE320</strain>
    </source>
</reference>
<reference key="3">
    <citation type="journal article" date="2007" name="Cell Host Microbe">
        <title>A plasmid-based reverse genetics system for animal double-stranded RNA viruses.</title>
        <authorList>
            <person name="Kobayashi T."/>
            <person name="Antar A.A."/>
            <person name="Boehme K.W."/>
            <person name="Danthi P."/>
            <person name="Eby E.A."/>
            <person name="Guglielmi K.M."/>
            <person name="Holm G.H."/>
            <person name="Johnson E.M."/>
            <person name="Maginnis M.S."/>
            <person name="Naik S."/>
            <person name="Skelton W.B."/>
            <person name="Wetzel J.D."/>
            <person name="Wilson G.J."/>
            <person name="Chappell J.D."/>
            <person name="Dermody T.S."/>
        </authorList>
    </citation>
    <scope>NUCLEOTIDE SEQUENCE [GENOMIC RNA]</scope>
    <source>
        <strain>Infectious clone</strain>
    </source>
</reference>
<reference key="4">
    <citation type="journal article" date="1982" name="Virology">
        <title>Sequence at both termini of the 10 genes of reovirus serotype 3 (strain Dearing).</title>
        <authorList>
            <person name="Antczak J.B."/>
            <person name="Chmelo R.A."/>
            <person name="Pickup D.J."/>
            <person name="Joklik W.K."/>
        </authorList>
    </citation>
    <scope>NUCLEOTIDE SEQUENCE [GENOMIC RNA] OF 1-17</scope>
</reference>
<reference key="5">
    <citation type="journal article" date="2003" name="J. Virol.">
        <title>Reovirus sigma NS and mu NS proteins form cytoplasmic inclusion structures in the absence of viral infection.</title>
        <authorList>
            <person name="Becker M.M."/>
            <person name="Peters T.R."/>
            <person name="Dermody T.S."/>
        </authorList>
    </citation>
    <scope>SUBUNIT</scope>
    <scope>INTERACTION WITH PROTEIN MU-NS</scope>
</reference>
<reference key="6">
    <citation type="journal article" date="2017" name="J. Virol.">
        <title>Mammalian Orthoreovirus Factories Modulate Stress Granule Protein Localization by Interaction with G3BP1.</title>
        <authorList>
            <person name="Choudhury P."/>
            <person name="Bussiere L.D."/>
            <person name="Miller C.L."/>
        </authorList>
    </citation>
    <scope>FUNCTION</scope>
    <scope>INTERACTION WITH HOST G3BP1</scope>
    <scope>INTERACTION WITH PROTEIN MU-NS</scope>
    <scope>SUBCELLULAR LOCATION</scope>
</reference>
<sequence>MASSLRAAISKIKRDDVGQQVCPNYVMLRSSVTTKVVRNVVEYQIRTGGFFSCLAMLRPLQYAKRERLLGQRNLERISTRDILQTRDLHSLCMPTPDAPMSNHQASTMRELICSYFKVDHADGLKYIPMDERYSPSSLARLFTMGMAGLHITTEPSYKRVPIMHLAADLDCMTLALPYMITLDGDTVVPVAPTLSAEQLLDDGLKGLACMDISYGCEVDANSRPAGDQSMDSSRCINELYCEETAEAICVLKTCLVLNCMQFKLEMDDLAHNAAELDKIQMMIPFSERVFRMASSFATIDAQCFRFCVMMKDKNLKIDMRETTRLWTRSASDDSVATSSLSISLDRGRWVAADASDARLLVFPIRV</sequence>
<feature type="chain" id="PRO_0000222759" description="Protein sigma-NS">
    <location>
        <begin position="1"/>
        <end position="366"/>
    </location>
</feature>
<feature type="region of interest" description="Important for ssRNA-binding and formation of complexes" evidence="1">
    <location>
        <begin position="1"/>
        <end position="11"/>
    </location>
</feature>
<feature type="sequence variant" description="In strain: Mutant tsE320.">
    <original>M</original>
    <variation>T</variation>
    <location>
        <position position="260"/>
    </location>
</feature>
<feature type="helix" evidence="7">
    <location>
        <begin position="4"/>
        <end position="11"/>
    </location>
</feature>
<feature type="strand" evidence="7">
    <location>
        <begin position="17"/>
        <end position="22"/>
    </location>
</feature>
<feature type="strand" evidence="7">
    <location>
        <begin position="26"/>
        <end position="28"/>
    </location>
</feature>
<feature type="strand" evidence="7">
    <location>
        <begin position="30"/>
        <end position="37"/>
    </location>
</feature>
<feature type="strand" evidence="7">
    <location>
        <begin position="40"/>
        <end position="46"/>
    </location>
</feature>
<feature type="helix" evidence="7">
    <location>
        <begin position="48"/>
        <end position="54"/>
    </location>
</feature>
<feature type="helix" evidence="7">
    <location>
        <begin position="55"/>
        <end position="57"/>
    </location>
</feature>
<feature type="helix" evidence="7">
    <location>
        <begin position="59"/>
        <end position="63"/>
    </location>
</feature>
<feature type="turn" evidence="7">
    <location>
        <begin position="64"/>
        <end position="68"/>
    </location>
</feature>
<feature type="helix" evidence="7">
    <location>
        <begin position="72"/>
        <end position="79"/>
    </location>
</feature>
<feature type="helix" evidence="7">
    <location>
        <begin position="85"/>
        <end position="90"/>
    </location>
</feature>
<feature type="strand" evidence="7">
    <location>
        <begin position="96"/>
        <end position="98"/>
    </location>
</feature>
<feature type="helix" evidence="7">
    <location>
        <begin position="105"/>
        <end position="116"/>
    </location>
</feature>
<feature type="helix" evidence="7">
    <location>
        <begin position="120"/>
        <end position="126"/>
    </location>
</feature>
<feature type="helix" evidence="7">
    <location>
        <begin position="135"/>
        <end position="146"/>
    </location>
</feature>
<feature type="strand" evidence="7">
    <location>
        <begin position="149"/>
        <end position="151"/>
    </location>
</feature>
<feature type="strand" evidence="7">
    <location>
        <begin position="153"/>
        <end position="155"/>
    </location>
</feature>
<feature type="strand" evidence="7">
    <location>
        <begin position="157"/>
        <end position="159"/>
    </location>
</feature>
<feature type="helix" evidence="7">
    <location>
        <begin position="164"/>
        <end position="169"/>
    </location>
</feature>
<feature type="strand" evidence="7">
    <location>
        <begin position="174"/>
        <end position="183"/>
    </location>
</feature>
<feature type="strand" evidence="7">
    <location>
        <begin position="186"/>
        <end position="190"/>
    </location>
</feature>
<feature type="helix" evidence="7">
    <location>
        <begin position="197"/>
        <end position="200"/>
    </location>
</feature>
<feature type="helix" evidence="7">
    <location>
        <begin position="202"/>
        <end position="209"/>
    </location>
</feature>
<feature type="strand" evidence="7">
    <location>
        <begin position="210"/>
        <end position="215"/>
    </location>
</feature>
<feature type="helix" evidence="7">
    <location>
        <begin position="236"/>
        <end position="239"/>
    </location>
</feature>
<feature type="turn" evidence="7">
    <location>
        <begin position="242"/>
        <end position="244"/>
    </location>
</feature>
<feature type="helix" evidence="7">
    <location>
        <begin position="245"/>
        <end position="271"/>
    </location>
</feature>
<feature type="helix" evidence="7">
    <location>
        <begin position="273"/>
        <end position="276"/>
    </location>
</feature>
<feature type="turn" evidence="7">
    <location>
        <begin position="277"/>
        <end position="279"/>
    </location>
</feature>
<feature type="helix" evidence="7">
    <location>
        <begin position="283"/>
        <end position="296"/>
    </location>
</feature>
<feature type="turn" evidence="7">
    <location>
        <begin position="297"/>
        <end position="299"/>
    </location>
</feature>
<feature type="helix" evidence="7">
    <location>
        <begin position="301"/>
        <end position="312"/>
    </location>
</feature>
<feature type="turn" evidence="7">
    <location>
        <begin position="313"/>
        <end position="315"/>
    </location>
</feature>
<feature type="helix" evidence="7">
    <location>
        <begin position="319"/>
        <end position="329"/>
    </location>
</feature>
<feature type="helix" evidence="7">
    <location>
        <begin position="332"/>
        <end position="334"/>
    </location>
</feature>
<feature type="helix" evidence="8">
    <location>
        <begin position="337"/>
        <end position="339"/>
    </location>
</feature>
<feature type="strand" evidence="7">
    <location>
        <begin position="341"/>
        <end position="344"/>
    </location>
</feature>
<feature type="strand" evidence="7">
    <location>
        <begin position="349"/>
        <end position="353"/>
    </location>
</feature>
<feature type="strand" evidence="7">
    <location>
        <begin position="356"/>
        <end position="361"/>
    </location>
</feature>